<gene>
    <name evidence="1" type="primary">addB</name>
    <name type="ordered locus">lwe2283</name>
</gene>
<name>ADDB_LISW6</name>
<reference key="1">
    <citation type="journal article" date="2006" name="J. Bacteriol.">
        <title>Whole-genome sequence of Listeria welshimeri reveals common steps in genome reduction with Listeria innocua as compared to Listeria monocytogenes.</title>
        <authorList>
            <person name="Hain T."/>
            <person name="Steinweg C."/>
            <person name="Kuenne C.T."/>
            <person name="Billion A."/>
            <person name="Ghai R."/>
            <person name="Chatterjee S.S."/>
            <person name="Domann E."/>
            <person name="Kaerst U."/>
            <person name="Goesmann A."/>
            <person name="Bekel T."/>
            <person name="Bartels D."/>
            <person name="Kaiser O."/>
            <person name="Meyer F."/>
            <person name="Puehler A."/>
            <person name="Weisshaar B."/>
            <person name="Wehland J."/>
            <person name="Liang C."/>
            <person name="Dandekar T."/>
            <person name="Lampidis R."/>
            <person name="Kreft J."/>
            <person name="Goebel W."/>
            <person name="Chakraborty T."/>
        </authorList>
    </citation>
    <scope>NUCLEOTIDE SEQUENCE [LARGE SCALE GENOMIC DNA]</scope>
    <source>
        <strain>ATCC 35897 / DSM 20650 / CCUG 15529 / CIP 8149 / NCTC 11857 / SLCC 5334 / V8</strain>
    </source>
</reference>
<accession>A0AL19</accession>
<proteinExistence type="inferred from homology"/>
<feature type="chain" id="PRO_0000379198" description="ATP-dependent helicase/deoxyribonuclease subunit B">
    <location>
        <begin position="1"/>
        <end position="1157"/>
    </location>
</feature>
<feature type="domain" description="UvrD-like helicase ATP-binding" evidence="1">
    <location>
        <begin position="1"/>
        <end position="277"/>
    </location>
</feature>
<feature type="domain" description="UvrD-like helicase C-terminal" evidence="1">
    <location>
        <begin position="272"/>
        <end position="578"/>
    </location>
</feature>
<feature type="binding site" evidence="1">
    <location>
        <begin position="8"/>
        <end position="15"/>
    </location>
    <ligand>
        <name>ATP</name>
        <dbReference type="ChEBI" id="CHEBI:30616"/>
    </ligand>
</feature>
<feature type="binding site" evidence="1">
    <location>
        <position position="794"/>
    </location>
    <ligand>
        <name>[4Fe-4S] cluster</name>
        <dbReference type="ChEBI" id="CHEBI:49883"/>
    </ligand>
</feature>
<feature type="binding site" evidence="1">
    <location>
        <position position="1115"/>
    </location>
    <ligand>
        <name>[4Fe-4S] cluster</name>
        <dbReference type="ChEBI" id="CHEBI:49883"/>
    </ligand>
</feature>
<feature type="binding site" evidence="1">
    <location>
        <position position="1118"/>
    </location>
    <ligand>
        <name>[4Fe-4S] cluster</name>
        <dbReference type="ChEBI" id="CHEBI:49883"/>
    </ligand>
</feature>
<feature type="binding site" evidence="1">
    <location>
        <position position="1124"/>
    </location>
    <ligand>
        <name>[4Fe-4S] cluster</name>
        <dbReference type="ChEBI" id="CHEBI:49883"/>
    </ligand>
</feature>
<protein>
    <recommendedName>
        <fullName evidence="1">ATP-dependent helicase/deoxyribonuclease subunit B</fullName>
        <ecNumber evidence="1">3.1.-.-</ecNumber>
    </recommendedName>
    <alternativeName>
        <fullName evidence="1">ATP-dependent helicase/nuclease subunit AddB</fullName>
    </alternativeName>
</protein>
<evidence type="ECO:0000255" key="1">
    <source>
        <dbReference type="HAMAP-Rule" id="MF_01452"/>
    </source>
</evidence>
<sequence>MTLQIIAGKSGTGKTTHLMDEVGKKIKKTSKTYIFIVPDQMTFQMETSFLNKESLSGMLGTQIFSFSRLAWKILQETGGLSKTFLSQTGIEMVIRKAALDQKDKLKIFSKATSRKGFYSELAKLFKEMKQEEVSVADLENSAINMSKSVTNKIHDISLIYQKYEELLAGKFLENEDYLRLLADKIIESDYLNQTEIIIDGFTSFSKQELTVIEKLMEKCDKVTVSLTLNVPEIQKGLEEYNMFKQSTEAYFALLEMAKLNKISVESDKLFLENKRAKSDSLAFLADVWGNNKFVTFEEKPQDLAIHQANNRRAEIEGIAREIRQLTLKGYRYQDMAILTRNISDYDVLCETVMESFDIPIFIDKKRAMAKHPFIEFIRSSIDAILFNWKYEPIFQAVKTEFFFDVSENTSIMRRKADILENYVLENGIQNKWKWEKEGDWIYRKIRGLSTNLLPQTDEELETQAIINEMRNLIVEPLSILENNLAKARTGTEFAMALYHFLEQVKAVEHLESWRQTAEENGYLELAREHEQAWSSVSELLDEFVEVLGEESLDINSFAEIVATGLDALEFSLLPPSLDQIVLSDMENAKLLDMKVIFAIGMNDGIMPLRQKDKGILSDQDRDSLRAENSNLKPSAKNNIGEEDLLAYKIISLPSDKLFLSYPAADEEGKVLSESNYLRKIKGQFKKLNEEVYLTDPSLLSDEEQSSYIRSKQATLGLLTSQLQMYKRGYPLSNVWWDAYNGYFEDTKESKVAKQVLSSLYYENKTKALHETTAKNLFGENIHASVSRMEKFFSCEFQHFAQYGLKLEERAHFKLQAVDMGEIFHGAMEWISAELKRNNQDWGNLTEEECRQMAKLAMTFLAPKIQHEILLSSKRMEYIQYKLLQIITRATTVLNEQAKSSAFRPIGLEVDFGLKGDIPSLKIPLKSESELLLQGRIDRIDVAEQDDRTFLRIIDYKSSSHDLALTEVYYGLALQMLTYLDIVVTNAQKMIGKTAEPAGVLYFHMHNQFVQADKELSDEAIAKELQKSSKMKGLILSDPVAVSLMDTSLEKGKSSNIIPAEIKQNGDLSARSRTATKEEFDKMRHFVRHKYQEAGNKILDGAVSINPYKLKERTPCQFCGFRSFCGFDPSLTSNQYRHLTNEKAENILTKMDIEGGTQ</sequence>
<comment type="function">
    <text evidence="1">The heterodimer acts as both an ATP-dependent DNA helicase and an ATP-dependent, dual-direction single-stranded exonuclease. Recognizes the chi site generating a DNA molecule suitable for the initiation of homologous recombination. The AddB subunit has 5' -&gt; 3' nuclease activity but not helicase activity.</text>
</comment>
<comment type="cofactor">
    <cofactor evidence="1">
        <name>Mg(2+)</name>
        <dbReference type="ChEBI" id="CHEBI:18420"/>
    </cofactor>
</comment>
<comment type="cofactor">
    <cofactor evidence="1">
        <name>[4Fe-4S] cluster</name>
        <dbReference type="ChEBI" id="CHEBI:49883"/>
    </cofactor>
    <text evidence="1">Binds 1 [4Fe-4S] cluster.</text>
</comment>
<comment type="subunit">
    <text evidence="1">Heterodimer of AddA and AddB.</text>
</comment>
<comment type="miscellaneous">
    <text evidence="1">Despite having conserved helicase domains, this subunit does not have helicase activity.</text>
</comment>
<comment type="similarity">
    <text evidence="1">Belongs to the helicase family. AddB/RexB type 1 subfamily.</text>
</comment>
<keyword id="KW-0004">4Fe-4S</keyword>
<keyword id="KW-0067">ATP-binding</keyword>
<keyword id="KW-0227">DNA damage</keyword>
<keyword id="KW-0234">DNA repair</keyword>
<keyword id="KW-0238">DNA-binding</keyword>
<keyword id="KW-0269">Exonuclease</keyword>
<keyword id="KW-0347">Helicase</keyword>
<keyword id="KW-0378">Hydrolase</keyword>
<keyword id="KW-0408">Iron</keyword>
<keyword id="KW-0411">Iron-sulfur</keyword>
<keyword id="KW-0479">Metal-binding</keyword>
<keyword id="KW-0540">Nuclease</keyword>
<keyword id="KW-0547">Nucleotide-binding</keyword>
<organism>
    <name type="scientific">Listeria welshimeri serovar 6b (strain ATCC 35897 / DSM 20650 / CCUG 15529 / CIP 8149 / NCTC 11857 / SLCC 5334 / V8)</name>
    <dbReference type="NCBI Taxonomy" id="386043"/>
    <lineage>
        <taxon>Bacteria</taxon>
        <taxon>Bacillati</taxon>
        <taxon>Bacillota</taxon>
        <taxon>Bacilli</taxon>
        <taxon>Bacillales</taxon>
        <taxon>Listeriaceae</taxon>
        <taxon>Listeria</taxon>
    </lineage>
</organism>
<dbReference type="EC" id="3.1.-.-" evidence="1"/>
<dbReference type="EMBL" id="AM263198">
    <property type="protein sequence ID" value="CAK21701.1"/>
    <property type="molecule type" value="Genomic_DNA"/>
</dbReference>
<dbReference type="RefSeq" id="WP_011703032.1">
    <property type="nucleotide sequence ID" value="NC_008555.1"/>
</dbReference>
<dbReference type="SMR" id="A0AL19"/>
<dbReference type="STRING" id="386043.lwe2283"/>
<dbReference type="GeneID" id="61190187"/>
<dbReference type="KEGG" id="lwe:lwe2283"/>
<dbReference type="eggNOG" id="COG3857">
    <property type="taxonomic scope" value="Bacteria"/>
</dbReference>
<dbReference type="HOGENOM" id="CLU_007838_0_0_9"/>
<dbReference type="OrthoDB" id="9758506at2"/>
<dbReference type="Proteomes" id="UP000000779">
    <property type="component" value="Chromosome"/>
</dbReference>
<dbReference type="GO" id="GO:0051539">
    <property type="term" value="F:4 iron, 4 sulfur cluster binding"/>
    <property type="evidence" value="ECO:0007669"/>
    <property type="project" value="UniProtKB-KW"/>
</dbReference>
<dbReference type="GO" id="GO:0008409">
    <property type="term" value="F:5'-3' exonuclease activity"/>
    <property type="evidence" value="ECO:0007669"/>
    <property type="project" value="UniProtKB-UniRule"/>
</dbReference>
<dbReference type="GO" id="GO:0005524">
    <property type="term" value="F:ATP binding"/>
    <property type="evidence" value="ECO:0007669"/>
    <property type="project" value="UniProtKB-UniRule"/>
</dbReference>
<dbReference type="GO" id="GO:0003690">
    <property type="term" value="F:double-stranded DNA binding"/>
    <property type="evidence" value="ECO:0007669"/>
    <property type="project" value="UniProtKB-UniRule"/>
</dbReference>
<dbReference type="GO" id="GO:0004386">
    <property type="term" value="F:helicase activity"/>
    <property type="evidence" value="ECO:0007669"/>
    <property type="project" value="UniProtKB-KW"/>
</dbReference>
<dbReference type="GO" id="GO:0046872">
    <property type="term" value="F:metal ion binding"/>
    <property type="evidence" value="ECO:0007669"/>
    <property type="project" value="UniProtKB-KW"/>
</dbReference>
<dbReference type="GO" id="GO:0000724">
    <property type="term" value="P:double-strand break repair via homologous recombination"/>
    <property type="evidence" value="ECO:0007669"/>
    <property type="project" value="UniProtKB-UniRule"/>
</dbReference>
<dbReference type="FunFam" id="3.90.320.10:FF:000006">
    <property type="entry name" value="ATP-dependent helicase/deoxyribonuclease subunit B"/>
    <property type="match status" value="1"/>
</dbReference>
<dbReference type="Gene3D" id="3.90.320.10">
    <property type="match status" value="1"/>
</dbReference>
<dbReference type="Gene3D" id="6.10.140.1030">
    <property type="match status" value="1"/>
</dbReference>
<dbReference type="Gene3D" id="3.40.50.300">
    <property type="entry name" value="P-loop containing nucleotide triphosphate hydrolases"/>
    <property type="match status" value="3"/>
</dbReference>
<dbReference type="HAMAP" id="MF_01452">
    <property type="entry name" value="AddB_type1"/>
    <property type="match status" value="1"/>
</dbReference>
<dbReference type="InterPro" id="IPR049035">
    <property type="entry name" value="ADDB_N"/>
</dbReference>
<dbReference type="InterPro" id="IPR014140">
    <property type="entry name" value="DNA_helicase_suAddB"/>
</dbReference>
<dbReference type="InterPro" id="IPR014017">
    <property type="entry name" value="DNA_helicase_UvrD-like_C"/>
</dbReference>
<dbReference type="InterPro" id="IPR027417">
    <property type="entry name" value="P-loop_NTPase"/>
</dbReference>
<dbReference type="InterPro" id="IPR011604">
    <property type="entry name" value="PDDEXK-like_dom_sf"/>
</dbReference>
<dbReference type="InterPro" id="IPR038726">
    <property type="entry name" value="PDDEXK_AddAB-type"/>
</dbReference>
<dbReference type="NCBIfam" id="TIGR02773">
    <property type="entry name" value="addB_Gpos"/>
    <property type="match status" value="1"/>
</dbReference>
<dbReference type="PANTHER" id="PTHR30591">
    <property type="entry name" value="RECBCD ENZYME SUBUNIT RECC"/>
    <property type="match status" value="1"/>
</dbReference>
<dbReference type="PANTHER" id="PTHR30591:SF1">
    <property type="entry name" value="RECBCD ENZYME SUBUNIT RECC"/>
    <property type="match status" value="1"/>
</dbReference>
<dbReference type="Pfam" id="PF21445">
    <property type="entry name" value="ADDB_N"/>
    <property type="match status" value="1"/>
</dbReference>
<dbReference type="Pfam" id="PF12705">
    <property type="entry name" value="PDDEXK_1"/>
    <property type="match status" value="1"/>
</dbReference>
<dbReference type="Pfam" id="PF13361">
    <property type="entry name" value="UvrD_C"/>
    <property type="match status" value="1"/>
</dbReference>
<dbReference type="SUPFAM" id="SSF52540">
    <property type="entry name" value="P-loop containing nucleoside triphosphate hydrolases"/>
    <property type="match status" value="1"/>
</dbReference>
<dbReference type="PROSITE" id="PS51198">
    <property type="entry name" value="UVRD_HELICASE_ATP_BIND"/>
    <property type="match status" value="1"/>
</dbReference>
<dbReference type="PROSITE" id="PS51217">
    <property type="entry name" value="UVRD_HELICASE_CTER"/>
    <property type="match status" value="1"/>
</dbReference>